<gene>
    <name type="primary">Ace2</name>
</gene>
<name>ACE2_MOUSE</name>
<keyword id="KW-0002">3D-structure</keyword>
<keyword id="KW-0025">Alternative splicing</keyword>
<keyword id="KW-0121">Carboxypeptidase</keyword>
<keyword id="KW-1003">Cell membrane</keyword>
<keyword id="KW-0966">Cell projection</keyword>
<keyword id="KW-0868">Chloride</keyword>
<keyword id="KW-0963">Cytoplasm</keyword>
<keyword id="KW-1015">Disulfide bond</keyword>
<keyword id="KW-0325">Glycoprotein</keyword>
<keyword id="KW-0378">Hydrolase</keyword>
<keyword id="KW-1017">Isopeptide bond</keyword>
<keyword id="KW-0472">Membrane</keyword>
<keyword id="KW-0479">Metal-binding</keyword>
<keyword id="KW-0482">Metalloprotease</keyword>
<keyword id="KW-0597">Phosphoprotein</keyword>
<keyword id="KW-0645">Protease</keyword>
<keyword id="KW-1185">Reference proteome</keyword>
<keyword id="KW-0964">Secreted</keyword>
<keyword id="KW-0732">Signal</keyword>
<keyword id="KW-0812">Transmembrane</keyword>
<keyword id="KW-1133">Transmembrane helix</keyword>
<keyword id="KW-0832">Ubl conjugation</keyword>
<keyword id="KW-0862">Zinc</keyword>
<comment type="function">
    <text evidence="2 7 9 12 13 14 15">Essential counter-regulatory carboxypeptidase of the renin-angiotensin hormone system that is a critical regulator of blood volume, systemic vascular resistance, and thus cardiovascular homeostasis. Converts angiotensin I to angiotensin 1-9, a nine-amino acid peptide with anti-hypertrophic effects in cardiomyocytes, and angiotensin II to angiotensin 1-7, which then acts as a beneficial vasodilator and anti-proliferation agent, counterbalancing the actions of the vasoconstrictor angiotensin II. Also removes the C-terminal residue from three other vasoactive peptides, neurotensin, kinetensin, and des-Arg bradykinin, but is not active on bradykinin. Also cleaves other biological peptides, such as apelins, casomorphins and dynorphin A (By similarity). By cleavage of angiotensin II, may be an important regulator of heart function (PubMed:12075344, PubMed:12967627). By cleavage of angiotensin II, may also have a protective role in acute lung injury (PubMed:16001071). Plays an important role in amino acid transport by acting as binding partner of amino acid transporter SLC6A19, regulating its trafficking on the cell surface and its activity (PubMed:18424768, PubMed:19185582, PubMed:22677001).</text>
</comment>
<comment type="catalytic activity">
    <reaction evidence="2">
        <text>angiotensin II + H2O = angiotensin-(1-7) + L-phenylalanine</text>
        <dbReference type="Rhea" id="RHEA:26554"/>
        <dbReference type="ChEBI" id="CHEBI:15377"/>
        <dbReference type="ChEBI" id="CHEBI:58095"/>
        <dbReference type="ChEBI" id="CHEBI:58506"/>
        <dbReference type="ChEBI" id="CHEBI:58922"/>
        <dbReference type="EC" id="3.4.17.23"/>
    </reaction>
    <physiologicalReaction direction="left-to-right" evidence="2">
        <dbReference type="Rhea" id="RHEA:26555"/>
    </physiologicalReaction>
</comment>
<comment type="catalytic activity">
    <reaction evidence="2">
        <text>angiotensin I + H2O = angiotensin-(1-9) + L-leucine</text>
        <dbReference type="Rhea" id="RHEA:63532"/>
        <dbReference type="ChEBI" id="CHEBI:15377"/>
        <dbReference type="ChEBI" id="CHEBI:57427"/>
        <dbReference type="ChEBI" id="CHEBI:147350"/>
        <dbReference type="ChEBI" id="CHEBI:147351"/>
    </reaction>
    <physiologicalReaction direction="left-to-right" evidence="2">
        <dbReference type="Rhea" id="RHEA:63533"/>
    </physiologicalReaction>
</comment>
<comment type="catalytic activity">
    <reaction evidence="2">
        <text>bradykinin(1-8) + H2O = bradykinin(1-7) + L-phenylalanine</text>
        <dbReference type="Rhea" id="RHEA:63536"/>
        <dbReference type="ChEBI" id="CHEBI:15377"/>
        <dbReference type="ChEBI" id="CHEBI:58095"/>
        <dbReference type="ChEBI" id="CHEBI:133069"/>
        <dbReference type="ChEBI" id="CHEBI:147352"/>
    </reaction>
    <physiologicalReaction direction="left-to-right" evidence="2">
        <dbReference type="Rhea" id="RHEA:63537"/>
    </physiologicalReaction>
</comment>
<comment type="catalytic activity">
    <reaction evidence="2">
        <text>neurotensin + H2O = neurotensin-(1-12) + L-leucine</text>
        <dbReference type="Rhea" id="RHEA:63540"/>
        <dbReference type="ChEBI" id="CHEBI:15377"/>
        <dbReference type="ChEBI" id="CHEBI:57427"/>
        <dbReference type="ChEBI" id="CHEBI:147362"/>
        <dbReference type="ChEBI" id="CHEBI:147363"/>
    </reaction>
    <physiologicalReaction direction="left-to-right" evidence="2">
        <dbReference type="Rhea" id="RHEA:63541"/>
    </physiologicalReaction>
</comment>
<comment type="catalytic activity">
    <reaction evidence="2">
        <text>kinetensin + H2O = kinetensin-(1-8) + L-leucine</text>
        <dbReference type="Rhea" id="RHEA:63544"/>
        <dbReference type="ChEBI" id="CHEBI:15377"/>
        <dbReference type="ChEBI" id="CHEBI:57427"/>
        <dbReference type="ChEBI" id="CHEBI:147364"/>
        <dbReference type="ChEBI" id="CHEBI:147365"/>
    </reaction>
    <physiologicalReaction direction="left-to-right" evidence="2">
        <dbReference type="Rhea" id="RHEA:63545"/>
    </physiologicalReaction>
</comment>
<comment type="catalytic activity">
    <reaction evidence="2">
        <text>dynorphin A-(1-13) + H2O = dynorphin A-(1-12) + L-lysine</text>
        <dbReference type="Rhea" id="RHEA:63556"/>
        <dbReference type="ChEBI" id="CHEBI:15377"/>
        <dbReference type="ChEBI" id="CHEBI:32551"/>
        <dbReference type="ChEBI" id="CHEBI:147381"/>
        <dbReference type="ChEBI" id="CHEBI:147383"/>
    </reaction>
    <physiologicalReaction direction="left-to-right" evidence="2">
        <dbReference type="Rhea" id="RHEA:63557"/>
    </physiologicalReaction>
</comment>
<comment type="catalytic activity">
    <reaction evidence="2">
        <text>apelin-13 + H2O = apelin-12 + L-phenylalanine</text>
        <dbReference type="Rhea" id="RHEA:63564"/>
        <dbReference type="ChEBI" id="CHEBI:15377"/>
        <dbReference type="ChEBI" id="CHEBI:58095"/>
        <dbReference type="ChEBI" id="CHEBI:147395"/>
        <dbReference type="ChEBI" id="CHEBI:147396"/>
    </reaction>
    <physiologicalReaction direction="left-to-right" evidence="2">
        <dbReference type="Rhea" id="RHEA:63565"/>
    </physiologicalReaction>
</comment>
<comment type="catalytic activity">
    <reaction evidence="2">
        <text>[Pyr1]apelin-13 + H2O = [Pyr1]apelin-12 + L-phenylalanine</text>
        <dbReference type="Rhea" id="RHEA:63604"/>
        <dbReference type="ChEBI" id="CHEBI:15377"/>
        <dbReference type="ChEBI" id="CHEBI:58095"/>
        <dbReference type="ChEBI" id="CHEBI:147415"/>
        <dbReference type="ChEBI" id="CHEBI:147416"/>
    </reaction>
    <physiologicalReaction direction="left-to-right" evidence="2">
        <dbReference type="Rhea" id="RHEA:63605"/>
    </physiologicalReaction>
</comment>
<comment type="catalytic activity">
    <reaction evidence="2">
        <text>apelin-17 + H2O = apelin-16 + L-phenylalanine</text>
        <dbReference type="Rhea" id="RHEA:63608"/>
        <dbReference type="ChEBI" id="CHEBI:15377"/>
        <dbReference type="ChEBI" id="CHEBI:58095"/>
        <dbReference type="ChEBI" id="CHEBI:147421"/>
        <dbReference type="ChEBI" id="CHEBI:147422"/>
    </reaction>
    <physiologicalReaction direction="left-to-right" evidence="2">
        <dbReference type="Rhea" id="RHEA:63609"/>
    </physiologicalReaction>
</comment>
<comment type="cofactor">
    <cofactor evidence="1">
        <name>Zn(2+)</name>
        <dbReference type="ChEBI" id="CHEBI:29105"/>
    </cofactor>
    <text evidence="1">Binds 1 zinc ion per subunit.</text>
</comment>
<comment type="cofactor">
    <cofactor evidence="1">
        <name>chloride</name>
        <dbReference type="ChEBI" id="CHEBI:17996"/>
    </cofactor>
    <text evidence="1">Binds 1 Cl(-) ion per subunit.</text>
</comment>
<comment type="subunit">
    <text evidence="2 14">Homodimer. Interacts with the catalytically active form of TMPRSS2 (By similarity). Interacts with SLC6A19; this interaction is essential for expression and function of SLC6A19 in intestine (PubMed:19185582). Interacts with ITGA5:ITGB1 (By similarity). Probably interacts (via endocytic sorting signal motif) with AP2M1; the interaction is inhibited by phosphorylation of Tyr-781 (By similarity). Interacts (via PDZ-binding motif) with NHERF1 (via PDZ domains); the interaction may enhance ACE2 membrane residence (By similarity).</text>
</comment>
<comment type="subunit">
    <text evidence="10">(Microbial infection) Weakly interacts with SARS-CoV S protein.</text>
</comment>
<comment type="interaction">
    <interactant intactId="EBI-8365920">
        <id>Q8R0I0</id>
    </interactant>
    <interactant intactId="EBI-26997256">
        <id>A0A6G6A1M4</id>
        <label>S</label>
    </interactant>
    <organismsDiffer>true</organismsDiffer>
    <experiments>2</experiments>
</comment>
<comment type="interaction">
    <interactant intactId="EBI-8365920">
        <id>Q8R0I0</id>
    </interactant>
    <interactant intactId="EBI-26997195">
        <id>A0A6M3G9R1</id>
        <label>S</label>
    </interactant>
    <organismsDiffer>true</organismsDiffer>
    <experiments>2</experiments>
</comment>
<comment type="interaction">
    <interactant intactId="EBI-8365920">
        <id>Q8R0I0</id>
    </interactant>
    <interactant intactId="EBI-25474821">
        <id>P0DTC2</id>
        <label>S</label>
    </interactant>
    <organismsDiffer>true</organismsDiffer>
    <experiments>4</experiments>
</comment>
<comment type="subcellular location">
    <molecule>Processed angiotensin-converting enzyme 2</molecule>
    <subcellularLocation>
        <location evidence="1">Secreted</location>
    </subcellularLocation>
</comment>
<comment type="subcellular location">
    <subcellularLocation>
        <location evidence="16">Cell membrane</location>
        <topology evidence="3">Single-pass type I membrane protein</topology>
    </subcellularLocation>
    <subcellularLocation>
        <location evidence="16">Cytoplasm</location>
    </subcellularLocation>
    <subcellularLocation>
        <location evidence="2">Cell projection</location>
        <location evidence="2">Cilium</location>
    </subcellularLocation>
    <subcellularLocation>
        <location evidence="2">Apical cell membrane</location>
    </subcellularLocation>
    <text evidence="16">Detected in both cell membrane and cytoplasm in neurons.</text>
</comment>
<comment type="alternative products">
    <event type="alternative splicing"/>
    <isoform>
        <id>Q8R0I0-1</id>
        <name>1</name>
        <sequence type="displayed"/>
    </isoform>
    <isoform>
        <id>Q8R0I0-2</id>
        <name>2</name>
        <sequence type="described" ref="VSP_014903"/>
    </isoform>
</comment>
<comment type="tissue specificity">
    <text evidence="8 11 12 14 15 17">Expressed in heart, kidney and forebrain (at protein level). Expressed in the small intestine, with expression in the intestinal brush border (at protein level) (PubMed:19185582, PubMed:22677001). Ubiquitously expressed, with highest levels in ileum, kidney and lung. In lung, expressed on vascular endothelial and airway epithelial cells. Also expressed at high levels in lung secretory club and goblet cells as well as in alveolar type 2 cells (PubMed:32425701).</text>
</comment>
<comment type="induction">
    <text evidence="12 17">Down-regulated in lung after acute injury. Exposure to cigarette smoke increases ACE2 expression up to 80% more in lungs (PubMed:32425701).</text>
</comment>
<comment type="domain">
    <text evidence="2">The cytoplasmic tail contains several linear motifs such as LIR, PDZ-binding, PTB and endocytic sorting signal motifs that would allow interaction with proteins that mediate endocytic trafficking and autophagy.</text>
</comment>
<comment type="PTM">
    <text evidence="1">Proteolytic cleavage by ADAM17 generates a secreted form. Also cleaved by serine proteases: TMPRSS2, TMPRSS11D and HPN/TMPRSS1 (By similarity).</text>
</comment>
<comment type="PTM">
    <text evidence="2">Phosphorylated. Phosphorylation at Tyr-781 probably inhibits interaction with AP2M1 and enables interactions with proteins containing SH2 domains.</text>
</comment>
<comment type="PTM">
    <text evidence="2">Ubiquitinated. Ubiquitinated on Lys-788 via 'Lys-48'-linked ubiquitin. 'Lys-48'-linked deubiquitinated by USP50 on the Lys-788; leading to its stabilization.</text>
</comment>
<comment type="disruption phenotype">
    <text evidence="7 14">Mice are viable and fertile, exhibit normal kidney and lung function, but show a severe reduction in cardiac contractility, and are highly sensitive to severe acute lung failure (PubMed:12075344). Mutant males exhibit an absence of SLC6A19 in small intestine brush border membranes, but normal SLC6A19 expression in kidney (PubMed:19185582). Abolished sodium-dependent transport of isoleucine in intestinal rings (PubMed:19185582). Transgenic mice overexpressing ACE2 in the heart appear healthy but show conduction disturbances and ventricular arrhythmias which leads to sudden death (PubMed:12075344).</text>
</comment>
<comment type="similarity">
    <text evidence="19">Belongs to the peptidase M2 family.</text>
</comment>
<comment type="sequence caution" evidence="19">
    <conflict type="frameshift">
        <sequence resource="EMBL-CDS" id="BAB40431"/>
    </conflict>
</comment>
<evidence type="ECO:0000250" key="1"/>
<evidence type="ECO:0000250" key="2">
    <source>
        <dbReference type="UniProtKB" id="Q9BYF1"/>
    </source>
</evidence>
<evidence type="ECO:0000255" key="3"/>
<evidence type="ECO:0000255" key="4">
    <source>
        <dbReference type="PROSITE-ProRule" id="PRU01354"/>
    </source>
</evidence>
<evidence type="ECO:0000255" key="5">
    <source>
        <dbReference type="PROSITE-ProRule" id="PRU01355"/>
    </source>
</evidence>
<evidence type="ECO:0000256" key="6">
    <source>
        <dbReference type="SAM" id="MobiDB-lite"/>
    </source>
</evidence>
<evidence type="ECO:0000269" key="7">
    <source>
    </source>
</evidence>
<evidence type="ECO:0000269" key="8">
    <source>
    </source>
</evidence>
<evidence type="ECO:0000269" key="9">
    <source>
    </source>
</evidence>
<evidence type="ECO:0000269" key="10">
    <source>
    </source>
</evidence>
<evidence type="ECO:0000269" key="11">
    <source>
    </source>
</evidence>
<evidence type="ECO:0000269" key="12">
    <source>
    </source>
</evidence>
<evidence type="ECO:0000269" key="13">
    <source>
    </source>
</evidence>
<evidence type="ECO:0000269" key="14">
    <source>
    </source>
</evidence>
<evidence type="ECO:0000269" key="15">
    <source>
    </source>
</evidence>
<evidence type="ECO:0000269" key="16">
    <source>
    </source>
</evidence>
<evidence type="ECO:0000269" key="17">
    <source>
    </source>
</evidence>
<evidence type="ECO:0000303" key="18">
    <source>
    </source>
</evidence>
<evidence type="ECO:0000305" key="19"/>
<evidence type="ECO:0007829" key="20">
    <source>
        <dbReference type="PDB" id="7WRI"/>
    </source>
</evidence>
<evidence type="ECO:0007829" key="21">
    <source>
        <dbReference type="PDB" id="7XO5"/>
    </source>
</evidence>
<evidence type="ECO:0007829" key="22">
    <source>
        <dbReference type="PDB" id="7XOC"/>
    </source>
</evidence>
<evidence type="ECO:0007829" key="23">
    <source>
        <dbReference type="PDB" id="8AQU"/>
    </source>
</evidence>
<evidence type="ECO:0007829" key="24">
    <source>
        <dbReference type="PDB" id="8AQV"/>
    </source>
</evidence>
<evidence type="ECO:0007829" key="25">
    <source>
        <dbReference type="PDB" id="8DM7"/>
    </source>
</evidence>
<evidence type="ECO:0007829" key="26">
    <source>
        <dbReference type="PDB" id="8DM9"/>
    </source>
</evidence>
<proteinExistence type="evidence at protein level"/>
<organism>
    <name type="scientific">Mus musculus</name>
    <name type="common">Mouse</name>
    <dbReference type="NCBI Taxonomy" id="10090"/>
    <lineage>
        <taxon>Eukaryota</taxon>
        <taxon>Metazoa</taxon>
        <taxon>Chordata</taxon>
        <taxon>Craniata</taxon>
        <taxon>Vertebrata</taxon>
        <taxon>Euteleostomi</taxon>
        <taxon>Mammalia</taxon>
        <taxon>Eutheria</taxon>
        <taxon>Euarchontoglires</taxon>
        <taxon>Glires</taxon>
        <taxon>Rodentia</taxon>
        <taxon>Myomorpha</taxon>
        <taxon>Muroidea</taxon>
        <taxon>Muridae</taxon>
        <taxon>Murinae</taxon>
        <taxon>Mus</taxon>
        <taxon>Mus</taxon>
    </lineage>
</organism>
<protein>
    <recommendedName>
        <fullName>Angiotensin-converting enzyme 2</fullName>
        <ecNumber evidence="2">3.4.17.23</ecNumber>
    </recommendedName>
    <alternativeName>
        <fullName>ACE-related carboxypeptidase</fullName>
        <ecNumber evidence="2">3.4.17.-</ecNumber>
    </alternativeName>
    <component>
        <recommendedName>
            <fullName>Processed angiotensin-converting enzyme 2</fullName>
        </recommendedName>
    </component>
</protein>
<sequence length="805" mass="92368">MSSSSWLLLSLVAVTTAQSLTEENAKTFLNNFNQEAEDLSYQSSLASWNYNTNITEENAQKMSEAAAKWSAFYEEQSKTAQSFSLQEIQTPIIKRQLQALQQSGSSALSADKNKQLNTILNTMSTIYSTGKVCNPKNPQECLLLEPGLDEIMATSTDYNSRLWAWEGWRAEVGKQLRPLYEEYVVLKNEMARANNYNDYGDYWRGDYEAEGADGYNYNRNQLIEDVERTFAEIKPLYEHLHAYVRRKLMDTYPSYISPTGCLPAHLLGDMWGRFWTNLYPLTVPFAQKPNIDVTDAMMNQGWDAERIFQEAEKFFVSVGLPHMTQGFWANSMLTEPADGRKVVCHPTAWDLGHGDFRIKMCTKVTMDNFLTAHHEMGHIQYDMAYARQPFLLRNGANEGFHEAVGEIMSLSAATPKHLKSIGLLPSDFQEDSETEINFLLKQALTIVGTLPFTYMLEKWRWMVFRGEIPKEQWMKKWWEMKREIVGVVEPLPHDETYCDPASLFHVSNDYSFIRYYTRTIYQFQFQEALCQAAKYNGSLHKCDISNSTEAGQKLLKMLSLGNSEPWTKALENVVGARNMDVKPLLNYFQPLFDWLKEQNRNSFVGWNTEWSPYADQSIKVRISLKSALGANAYEWTNNEMFLFRSSVAYAMRKYFSIIKNQTVPFLEEDVRVSDLKPRVSFYFFVTSPQNVSDVIPRSEVEDAIRMSRGRINDVFGLNDNSLEFLGIHPTLEPPYQPPVTIWLIIFGVVMALVVVGIIILIVTGIKGRKKKNETKREENPYDSMDIGKGESNAGFQNSDDAQTSF</sequence>
<reference key="1">
    <citation type="journal article" date="2002" name="DNA Seq.">
        <title>Molecular cloning, mRNA expression, and chromosomal localization of mouse angiotensin-converting enzyme-related carboxypeptidase (mACE2).</title>
        <authorList>
            <person name="Komatsu T."/>
            <person name="Suzuki Y."/>
            <person name="Imai J."/>
            <person name="Sugano S."/>
            <person name="Hida M."/>
            <person name="Tanigami A."/>
            <person name="Muroi S."/>
            <person name="Yamada Y."/>
            <person name="Hanaoka K."/>
        </authorList>
    </citation>
    <scope>NUCLEOTIDE SEQUENCE [MRNA] (ISOFORMS 1 AND 2)</scope>
    <scope>TISSUE SPECIFICITY</scope>
</reference>
<reference key="2">
    <citation type="journal article" date="2004" name="Genome Res.">
        <title>The status, quality, and expansion of the NIH full-length cDNA project: the Mammalian Gene Collection (MGC).</title>
        <authorList>
            <consortium name="The MGC Project Team"/>
        </authorList>
    </citation>
    <scope>NUCLEOTIDE SEQUENCE [LARGE SCALE MRNA] (ISOFORM 1)</scope>
    <source>
        <strain>FVB/N</strain>
        <tissue>Kidney</tissue>
    </source>
</reference>
<reference key="3">
    <citation type="journal article" date="2002" name="Nature">
        <title>Angiotensin-converting enzyme 2 is an essential regulator of heart function.</title>
        <authorList>
            <person name="Crackower M.A."/>
            <person name="Sarao R."/>
            <person name="Oudit G.Y."/>
            <person name="Yagil C."/>
            <person name="Kozieradzki I."/>
            <person name="Scanga S.E."/>
            <person name="Oliveira-dos-Santos A.J."/>
            <person name="da Costa J."/>
            <person name="Zhang L."/>
            <person name="Pei Y."/>
            <person name="Scholey J."/>
            <person name="Ferrario C.M."/>
            <person name="Manoukian A.S."/>
            <person name="Chappell M.C."/>
            <person name="Backx P.H."/>
            <person name="Yagil Y."/>
            <person name="Penninger J.M."/>
        </authorList>
    </citation>
    <scope>FUNCTION</scope>
    <scope>DISRUPTION PHENOTYPE</scope>
</reference>
<reference key="4">
    <citation type="journal article" date="2003" name="J. Mol. Cell. Cardiol.">
        <title>Heart block, ventricular tachycardia, and sudden death in ACE2 transgenic mice with downregulated connexins.</title>
        <authorList>
            <person name="Donoghue M."/>
            <person name="Wakimoto H."/>
            <person name="Maguire C.T."/>
            <person name="Acton S."/>
            <person name="Hales P."/>
            <person name="Stagliano N."/>
            <person name="Fairchild-Huntress V."/>
            <person name="Xu J."/>
            <person name="Lorenz J.N."/>
            <person name="Kadambi V."/>
            <person name="Berul C.I."/>
            <person name="Breitbart R.E."/>
        </authorList>
    </citation>
    <scope>FUNCTION</scope>
</reference>
<reference key="5">
    <citation type="journal article" date="2004" name="J. Virol.">
        <title>Efficient replication of severe acute respiratory syndrome coronavirus in mouse cells is limited by murine angiotensin-converting enzyme 2.</title>
        <authorList>
            <person name="Li W."/>
            <person name="Greenough T.C."/>
            <person name="Moore M.J."/>
            <person name="Vasilieva N."/>
            <person name="Somasundaran M."/>
            <person name="Sullivan J.L."/>
            <person name="Farzan M."/>
            <person name="Choe H."/>
        </authorList>
    </citation>
    <scope>INTERACTION WITH SARS-COV S PROTEIN</scope>
</reference>
<reference key="6">
    <citation type="journal article" date="2005" name="Nature">
        <title>Angiotensin-converting enzyme 2 protects from severe acute lung failure.</title>
        <authorList>
            <person name="Imai Y."/>
            <person name="Kuba K."/>
            <person name="Rao S."/>
            <person name="Huan Y."/>
            <person name="Guo F."/>
            <person name="Guan B."/>
            <person name="Yang P."/>
            <person name="Sarao R."/>
            <person name="Wada T."/>
            <person name="Leong-Poi H."/>
            <person name="Crackower M.A."/>
            <person name="Fukamizu A."/>
            <person name="Hui C.-C."/>
            <person name="Hein L."/>
            <person name="Uhlig S."/>
            <person name="Slutsky A.S."/>
            <person name="Jiang C."/>
            <person name="Penninger J.M."/>
        </authorList>
    </citation>
    <scope>FUNCTION</scope>
    <scope>TISSUE SPECIFICITY</scope>
    <scope>INDUCTION</scope>
</reference>
<reference key="7">
    <citation type="journal article" date="2005" name="Peptides">
        <title>Organ-specific distribution of ACE2 mRNA and correlating peptidase activity in rodents.</title>
        <authorList>
            <person name="Gembardt F."/>
            <person name="Sterner-Kock A."/>
            <person name="Imboden H."/>
            <person name="Spalteholz M."/>
            <person name="Reibitz F."/>
            <person name="Schultheiss H.-P."/>
            <person name="Siems W.-E."/>
            <person name="Walther T."/>
        </authorList>
    </citation>
    <scope>TISSUE SPECIFICITY</scope>
</reference>
<reference key="8">
    <citation type="journal article" date="2008" name="FASEB J.">
        <title>A protein complex in the brush-border membrane explains a Hartnup disorder allele.</title>
        <authorList>
            <person name="Kowalczuk S."/>
            <person name="Broeer A."/>
            <person name="Tietze N."/>
            <person name="Vanslambrouck J.M."/>
            <person name="Rasko J.E."/>
            <person name="Broeer S."/>
        </authorList>
    </citation>
    <scope>FUNCTION</scope>
</reference>
<reference key="9">
    <citation type="journal article" date="2009" name="Gastroenterology">
        <title>Tissue-specific amino acid transporter partners ACE2 and collectrin differentially interact with hartnup mutations.</title>
        <authorList>
            <person name="Camargo S.M."/>
            <person name="Singer D."/>
            <person name="Makrides V."/>
            <person name="Huggel K."/>
            <person name="Pos K.M."/>
            <person name="Wagner C.A."/>
            <person name="Kuba K."/>
            <person name="Danilczyk U."/>
            <person name="Skovby F."/>
            <person name="Kleta R."/>
            <person name="Penninger J.M."/>
            <person name="Verrey F."/>
        </authorList>
    </citation>
    <scope>FUNCTION</scope>
    <scope>INTERACTION WITH SLC6A19</scope>
    <scope>TISSUE SPECIFICITY</scope>
    <scope>DISRUPTION PHENOTYPE</scope>
</reference>
<reference key="10">
    <citation type="journal article" date="2010" name="Cell">
        <title>A tissue-specific atlas of mouse protein phosphorylation and expression.</title>
        <authorList>
            <person name="Huttlin E.L."/>
            <person name="Jedrychowski M.P."/>
            <person name="Elias J.E."/>
            <person name="Goswami T."/>
            <person name="Rad R."/>
            <person name="Beausoleil S.A."/>
            <person name="Villen J."/>
            <person name="Haas W."/>
            <person name="Sowa M.E."/>
            <person name="Gygi S.P."/>
        </authorList>
    </citation>
    <scope>IDENTIFICATION BY MASS SPECTROMETRY [LARGE SCALE ANALYSIS]</scope>
    <source>
        <tissue>Kidney</tissue>
    </source>
</reference>
<reference key="11">
    <citation type="journal article" date="2012" name="Biochem. J.">
        <title>Intestinal peptidases form functional complexes with the neutral amino acid transporter B(0)AT1.</title>
        <authorList>
            <person name="Fairweather S.J."/>
            <person name="Broeer A."/>
            <person name="O'Mara M.L."/>
            <person name="Broeer S."/>
        </authorList>
    </citation>
    <scope>FUNCTION</scope>
    <scope>TISSUE SPECIFICITY</scope>
</reference>
<reference key="12">
    <citation type="journal article" date="2013" name="Am. J. Physiol.">
        <title>Angiotensin II regulates ACE and ACE2 in neurons through p38 mitogen-activated protein kinase and extracellular signal-regulated kinase 1/2 signaling.</title>
        <authorList>
            <person name="Xiao L."/>
            <person name="Haack K.K."/>
            <person name="Zucker I.H."/>
        </authorList>
    </citation>
    <scope>SUBCELLULAR LOCATION</scope>
</reference>
<reference key="13">
    <citation type="journal article" date="2020" name="Dev. Cell">
        <title>Cigarette smoke exposure and inflammatory signaling increase the expression of the SARS-CoV-2 receptor ACE2 in the respiratory tract.</title>
        <authorList>
            <person name="Smith J.C."/>
            <person name="Sausville E.L."/>
            <person name="Girish V."/>
            <person name="Yuan M.L."/>
            <person name="Vasudevan A."/>
            <person name="John K.M."/>
            <person name="Sheltzer J.M."/>
        </authorList>
    </citation>
    <scope>TISSUE SPECIFICITY</scope>
    <scope>INDUCTION</scope>
</reference>
<accession>Q8R0I0</accession>
<accession>Q99N70</accession>
<accession>Q99N71</accession>
<dbReference type="EC" id="3.4.17.23" evidence="2"/>
<dbReference type="EC" id="3.4.17.-" evidence="2"/>
<dbReference type="EMBL" id="AB053181">
    <property type="protein sequence ID" value="BAB40431.1"/>
    <property type="status" value="ALT_FRAME"/>
    <property type="molecule type" value="mRNA"/>
</dbReference>
<dbReference type="EMBL" id="AB053182">
    <property type="protein sequence ID" value="BAB40432.1"/>
    <property type="molecule type" value="mRNA"/>
</dbReference>
<dbReference type="EMBL" id="BC026801">
    <property type="protein sequence ID" value="AAH26801.1"/>
    <property type="molecule type" value="mRNA"/>
</dbReference>
<dbReference type="CCDS" id="CCDS30518.1">
    <molecule id="Q8R0I0-1"/>
</dbReference>
<dbReference type="RefSeq" id="NP_001123985.1">
    <molecule id="Q8R0I0-1"/>
    <property type="nucleotide sequence ID" value="NM_001130513.1"/>
</dbReference>
<dbReference type="RefSeq" id="NP_081562.2">
    <molecule id="Q8R0I0-1"/>
    <property type="nucleotide sequence ID" value="NM_027286.4"/>
</dbReference>
<dbReference type="PDB" id="7FDK">
    <property type="method" value="EM"/>
    <property type="resolution" value="3.69 A"/>
    <property type="chains" value="A=1-615"/>
</dbReference>
<dbReference type="PDB" id="7WRH">
    <property type="method" value="EM"/>
    <property type="resolution" value="2.66 A"/>
    <property type="chains" value="D=18-615"/>
</dbReference>
<dbReference type="PDB" id="7WRI">
    <property type="method" value="EM"/>
    <property type="resolution" value="3.03 A"/>
    <property type="chains" value="A=18-615"/>
</dbReference>
<dbReference type="PDB" id="7XO4">
    <property type="method" value="EM"/>
    <property type="resolution" value="3.24 A"/>
    <property type="chains" value="D/E=1-805"/>
</dbReference>
<dbReference type="PDB" id="7XO5">
    <property type="method" value="EM"/>
    <property type="resolution" value="3.13 A"/>
    <property type="chains" value="D=1-805"/>
</dbReference>
<dbReference type="PDB" id="7XO6">
    <property type="method" value="EM"/>
    <property type="resolution" value="2.60 A"/>
    <property type="chains" value="D=1-805"/>
</dbReference>
<dbReference type="PDB" id="7XOA">
    <property type="method" value="EM"/>
    <property type="resolution" value="3.20 A"/>
    <property type="chains" value="D=1-805"/>
</dbReference>
<dbReference type="PDB" id="7XOB">
    <property type="method" value="EM"/>
    <property type="resolution" value="3.30 A"/>
    <property type="chains" value="D/E=1-805"/>
</dbReference>
<dbReference type="PDB" id="7XOC">
    <property type="method" value="EM"/>
    <property type="resolution" value="3.00 A"/>
    <property type="chains" value="D=1-805"/>
</dbReference>
<dbReference type="PDB" id="7YVU">
    <property type="method" value="EM"/>
    <property type="resolution" value="3.20 A"/>
    <property type="chains" value="A=19-614"/>
</dbReference>
<dbReference type="PDB" id="8AQT">
    <property type="method" value="EM"/>
    <property type="resolution" value="4.40 A"/>
    <property type="chains" value="A=19-615"/>
</dbReference>
<dbReference type="PDB" id="8AQU">
    <property type="method" value="EM"/>
    <property type="resolution" value="3.22 A"/>
    <property type="chains" value="A=19-615"/>
</dbReference>
<dbReference type="PDB" id="8AQV">
    <property type="method" value="EM"/>
    <property type="resolution" value="2.96 A"/>
    <property type="chains" value="A=19-615"/>
</dbReference>
<dbReference type="PDB" id="8AQW">
    <property type="method" value="EM"/>
    <property type="resolution" value="3.30 A"/>
    <property type="chains" value="A=19-615"/>
</dbReference>
<dbReference type="PDB" id="8DM7">
    <property type="method" value="EM"/>
    <property type="resolution" value="2.49 A"/>
    <property type="chains" value="D/E=1-615"/>
</dbReference>
<dbReference type="PDB" id="8DM8">
    <property type="method" value="EM"/>
    <property type="resolution" value="2.68 A"/>
    <property type="chains" value="D=1-615"/>
</dbReference>
<dbReference type="PDB" id="8DM9">
    <property type="method" value="EM"/>
    <property type="resolution" value="2.56 A"/>
    <property type="chains" value="D=1-615"/>
</dbReference>
<dbReference type="PDB" id="8DMA">
    <property type="method" value="EM"/>
    <property type="resolution" value="2.79 A"/>
    <property type="chains" value="D=1-615"/>
</dbReference>
<dbReference type="PDB" id="8UZE">
    <property type="method" value="X-ray"/>
    <property type="resolution" value="3.03 A"/>
    <property type="chains" value="A/B=19-58, A/B=78-102, A/B=322-367"/>
</dbReference>
<dbReference type="PDB" id="8UZF">
    <property type="method" value="X-ray"/>
    <property type="resolution" value="3.28 A"/>
    <property type="chains" value="A/B=20-58, A/B=78-102, A/B=322-367"/>
</dbReference>
<dbReference type="PDB" id="8VKL">
    <property type="method" value="EM"/>
    <property type="resolution" value="2.91 A"/>
    <property type="chains" value="D/F=1-615"/>
</dbReference>
<dbReference type="PDB" id="8VKM">
    <property type="method" value="EM"/>
    <property type="resolution" value="2.83 A"/>
    <property type="chains" value="D=1-615"/>
</dbReference>
<dbReference type="PDB" id="8VKN">
    <property type="method" value="EM"/>
    <property type="resolution" value="2.93 A"/>
    <property type="chains" value="D=1-615"/>
</dbReference>
<dbReference type="PDBsum" id="7FDK"/>
<dbReference type="PDBsum" id="7WRH"/>
<dbReference type="PDBsum" id="7WRI"/>
<dbReference type="PDBsum" id="7XO4"/>
<dbReference type="PDBsum" id="7XO5"/>
<dbReference type="PDBsum" id="7XO6"/>
<dbReference type="PDBsum" id="7XOA"/>
<dbReference type="PDBsum" id="7XOB"/>
<dbReference type="PDBsum" id="7XOC"/>
<dbReference type="PDBsum" id="7YVU"/>
<dbReference type="PDBsum" id="8AQT"/>
<dbReference type="PDBsum" id="8AQU"/>
<dbReference type="PDBsum" id="8AQV"/>
<dbReference type="PDBsum" id="8AQW"/>
<dbReference type="PDBsum" id="8DM7"/>
<dbReference type="PDBsum" id="8DM8"/>
<dbReference type="PDBsum" id="8DM9"/>
<dbReference type="PDBsum" id="8DMA"/>
<dbReference type="PDBsum" id="8UZE"/>
<dbReference type="PDBsum" id="8UZF"/>
<dbReference type="PDBsum" id="8VKL"/>
<dbReference type="PDBsum" id="8VKM"/>
<dbReference type="PDBsum" id="8VKN"/>
<dbReference type="EMDB" id="EMD-27529"/>
<dbReference type="EMDB" id="EMD-27530"/>
<dbReference type="EMDB" id="EMD-27531"/>
<dbReference type="EMDB" id="EMD-27532"/>
<dbReference type="EMDB" id="EMD-31546"/>
<dbReference type="EMDB" id="EMD-32726"/>
<dbReference type="EMDB" id="EMD-32727"/>
<dbReference type="EMDB" id="EMD-33336"/>
<dbReference type="EMDB" id="EMD-33337"/>
<dbReference type="EMDB" id="EMD-33338"/>
<dbReference type="EMDB" id="EMD-33342"/>
<dbReference type="EMDB" id="EMD-33343"/>
<dbReference type="EMDB" id="EMD-33344"/>
<dbReference type="EMDB" id="EMD-34138"/>
<dbReference type="EMDB" id="EMD-43321"/>
<dbReference type="EMDB" id="EMD-43322"/>
<dbReference type="EMDB" id="EMD-43323"/>
<dbReference type="SMR" id="Q8R0I0"/>
<dbReference type="BioGRID" id="213814">
    <property type="interactions" value="5"/>
</dbReference>
<dbReference type="FunCoup" id="Q8R0I0">
    <property type="interactions" value="313"/>
</dbReference>
<dbReference type="IntAct" id="Q8R0I0">
    <property type="interactions" value="3"/>
</dbReference>
<dbReference type="STRING" id="10090.ENSMUSP00000107890"/>
<dbReference type="GuidetoPHARMACOLOGY" id="1614"/>
<dbReference type="MEROPS" id="M02.006"/>
<dbReference type="GlyCosmos" id="Q8R0I0">
    <property type="glycosylation" value="5 sites, No reported glycans"/>
</dbReference>
<dbReference type="GlyGen" id="Q8R0I0">
    <property type="glycosylation" value="6 sites, 2 N-linked glycans (2 sites)"/>
</dbReference>
<dbReference type="iPTMnet" id="Q8R0I0"/>
<dbReference type="PhosphoSitePlus" id="Q8R0I0"/>
<dbReference type="jPOST" id="Q8R0I0"/>
<dbReference type="PaxDb" id="10090-ENSMUSP00000107890"/>
<dbReference type="PeptideAtlas" id="Q8R0I0"/>
<dbReference type="ProteomicsDB" id="285640">
    <molecule id="Q8R0I0-1"/>
</dbReference>
<dbReference type="ProteomicsDB" id="285641">
    <molecule id="Q8R0I0-2"/>
</dbReference>
<dbReference type="Antibodypedia" id="344">
    <property type="antibodies" value="1235 antibodies from 49 providers"/>
</dbReference>
<dbReference type="DNASU" id="70008"/>
<dbReference type="Ensembl" id="ENSMUST00000073973.11">
    <molecule id="Q8R0I0-1"/>
    <property type="protein sequence ID" value="ENSMUSP00000073626.5"/>
    <property type="gene ID" value="ENSMUSG00000015405.16"/>
</dbReference>
<dbReference type="Ensembl" id="ENSMUST00000112271.10">
    <molecule id="Q8R0I0-1"/>
    <property type="protein sequence ID" value="ENSMUSP00000107890.4"/>
    <property type="gene ID" value="ENSMUSG00000015405.16"/>
</dbReference>
<dbReference type="GeneID" id="70008"/>
<dbReference type="KEGG" id="mmu:70008"/>
<dbReference type="UCSC" id="uc009uvf.2">
    <molecule id="Q8R0I0-1"/>
    <property type="organism name" value="mouse"/>
</dbReference>
<dbReference type="AGR" id="MGI:1917258"/>
<dbReference type="CTD" id="59272"/>
<dbReference type="MGI" id="MGI:1917258">
    <property type="gene designation" value="Ace2"/>
</dbReference>
<dbReference type="VEuPathDB" id="HostDB:ENSMUSG00000015405"/>
<dbReference type="eggNOG" id="KOG3690">
    <property type="taxonomic scope" value="Eukaryota"/>
</dbReference>
<dbReference type="GeneTree" id="ENSGT00940000158077"/>
<dbReference type="HOGENOM" id="CLU_014364_3_0_1"/>
<dbReference type="InParanoid" id="Q8R0I0"/>
<dbReference type="OMA" id="FTVIHHE"/>
<dbReference type="OrthoDB" id="10029630at2759"/>
<dbReference type="PhylomeDB" id="Q8R0I0"/>
<dbReference type="TreeFam" id="TF312861"/>
<dbReference type="BRENDA" id="3.4.17.23">
    <property type="organism ID" value="3474"/>
</dbReference>
<dbReference type="Reactome" id="R-MMU-2022377">
    <property type="pathway name" value="Metabolism of Angiotensinogen to Angiotensins"/>
</dbReference>
<dbReference type="SABIO-RK" id="Q8R0I0"/>
<dbReference type="BioGRID-ORCS" id="70008">
    <property type="hits" value="2 hits in 78 CRISPR screens"/>
</dbReference>
<dbReference type="ChiTaRS" id="Ace2">
    <property type="organism name" value="mouse"/>
</dbReference>
<dbReference type="PRO" id="PR:Q8R0I0"/>
<dbReference type="Proteomes" id="UP000000589">
    <property type="component" value="Chromosome X"/>
</dbReference>
<dbReference type="RNAct" id="Q8R0I0">
    <property type="molecule type" value="protein"/>
</dbReference>
<dbReference type="Bgee" id="ENSMUSG00000015405">
    <property type="expression patterns" value="Expressed in small intestine Peyer's patch and 125 other cell types or tissues"/>
</dbReference>
<dbReference type="ExpressionAtlas" id="Q8R0I0">
    <property type="expression patterns" value="baseline and differential"/>
</dbReference>
<dbReference type="GO" id="GO:0016324">
    <property type="term" value="C:apical plasma membrane"/>
    <property type="evidence" value="ECO:0007669"/>
    <property type="project" value="UniProtKB-SubCell"/>
</dbReference>
<dbReference type="GO" id="GO:0031526">
    <property type="term" value="C:brush border membrane"/>
    <property type="evidence" value="ECO:0000314"/>
    <property type="project" value="UniProtKB"/>
</dbReference>
<dbReference type="GO" id="GO:0009986">
    <property type="term" value="C:cell surface"/>
    <property type="evidence" value="ECO:0000250"/>
    <property type="project" value="UniProtKB"/>
</dbReference>
<dbReference type="GO" id="GO:0005929">
    <property type="term" value="C:cilium"/>
    <property type="evidence" value="ECO:0007669"/>
    <property type="project" value="UniProtKB-SubCell"/>
</dbReference>
<dbReference type="GO" id="GO:0005737">
    <property type="term" value="C:cytoplasm"/>
    <property type="evidence" value="ECO:0000314"/>
    <property type="project" value="UniProtKB"/>
</dbReference>
<dbReference type="GO" id="GO:0005576">
    <property type="term" value="C:extracellular region"/>
    <property type="evidence" value="ECO:0000314"/>
    <property type="project" value="MGI"/>
</dbReference>
<dbReference type="GO" id="GO:0005615">
    <property type="term" value="C:extracellular space"/>
    <property type="evidence" value="ECO:0007669"/>
    <property type="project" value="Ensembl"/>
</dbReference>
<dbReference type="GO" id="GO:0005886">
    <property type="term" value="C:plasma membrane"/>
    <property type="evidence" value="ECO:0000314"/>
    <property type="project" value="UniProtKB"/>
</dbReference>
<dbReference type="GO" id="GO:0004180">
    <property type="term" value="F:carboxypeptidase activity"/>
    <property type="evidence" value="ECO:0000304"/>
    <property type="project" value="MGI"/>
</dbReference>
<dbReference type="GO" id="GO:0004175">
    <property type="term" value="F:endopeptidase activity"/>
    <property type="evidence" value="ECO:0007669"/>
    <property type="project" value="Ensembl"/>
</dbReference>
<dbReference type="GO" id="GO:0042802">
    <property type="term" value="F:identical protein binding"/>
    <property type="evidence" value="ECO:0007669"/>
    <property type="project" value="Ensembl"/>
</dbReference>
<dbReference type="GO" id="GO:0046872">
    <property type="term" value="F:metal ion binding"/>
    <property type="evidence" value="ECO:0007669"/>
    <property type="project" value="UniProtKB-KW"/>
</dbReference>
<dbReference type="GO" id="GO:0004181">
    <property type="term" value="F:metallocarboxypeptidase activity"/>
    <property type="evidence" value="ECO:0000314"/>
    <property type="project" value="MGI"/>
</dbReference>
<dbReference type="GO" id="GO:0008241">
    <property type="term" value="F:peptidyl-dipeptidase activity"/>
    <property type="evidence" value="ECO:0007669"/>
    <property type="project" value="Ensembl"/>
</dbReference>
<dbReference type="GO" id="GO:0141109">
    <property type="term" value="F:transporter activator activity"/>
    <property type="evidence" value="ECO:0007669"/>
    <property type="project" value="Ensembl"/>
</dbReference>
<dbReference type="GO" id="GO:0001618">
    <property type="term" value="F:virus receptor activity"/>
    <property type="evidence" value="ECO:0000250"/>
    <property type="project" value="UniProtKB"/>
</dbReference>
<dbReference type="GO" id="GO:0002003">
    <property type="term" value="P:angiotensin maturation"/>
    <property type="evidence" value="ECO:0000314"/>
    <property type="project" value="MGI"/>
</dbReference>
<dbReference type="GO" id="GO:0003051">
    <property type="term" value="P:angiotensin-mediated drinking behavior"/>
    <property type="evidence" value="ECO:0007669"/>
    <property type="project" value="Ensembl"/>
</dbReference>
<dbReference type="GO" id="GO:0098670">
    <property type="term" value="P:entry receptor-mediated virion attachment to host cell"/>
    <property type="evidence" value="ECO:0007669"/>
    <property type="project" value="Ensembl"/>
</dbReference>
<dbReference type="GO" id="GO:0060135">
    <property type="term" value="P:maternal process involved in female pregnancy"/>
    <property type="evidence" value="ECO:0007669"/>
    <property type="project" value="Ensembl"/>
</dbReference>
<dbReference type="GO" id="GO:0070373">
    <property type="term" value="P:negative regulation of ERK1 and ERK2 cascade"/>
    <property type="evidence" value="ECO:0007669"/>
    <property type="project" value="Ensembl"/>
</dbReference>
<dbReference type="GO" id="GO:0048662">
    <property type="term" value="P:negative regulation of smooth muscle cell proliferation"/>
    <property type="evidence" value="ECO:0007669"/>
    <property type="project" value="Ensembl"/>
</dbReference>
<dbReference type="GO" id="GO:0060452">
    <property type="term" value="P:positive regulation of cardiac muscle contraction"/>
    <property type="evidence" value="ECO:0000315"/>
    <property type="project" value="BHF-UCL"/>
</dbReference>
<dbReference type="GO" id="GO:1903598">
    <property type="term" value="P:positive regulation of gap junction assembly"/>
    <property type="evidence" value="ECO:0007669"/>
    <property type="project" value="Ensembl"/>
</dbReference>
<dbReference type="GO" id="GO:1905737">
    <property type="term" value="P:positive regulation of L-proline import across plasma membrane"/>
    <property type="evidence" value="ECO:0007669"/>
    <property type="project" value="Ensembl"/>
</dbReference>
<dbReference type="GO" id="GO:1903779">
    <property type="term" value="P:regulation of cardiac conduction"/>
    <property type="evidence" value="ECO:0007669"/>
    <property type="project" value="Ensembl"/>
</dbReference>
<dbReference type="GO" id="GO:0015827">
    <property type="term" value="P:tryptophan transport"/>
    <property type="evidence" value="ECO:0000315"/>
    <property type="project" value="CACAO"/>
</dbReference>
<dbReference type="CDD" id="cd06461">
    <property type="entry name" value="M2_ACE"/>
    <property type="match status" value="1"/>
</dbReference>
<dbReference type="FunFam" id="1.10.1370.30:FF:000001">
    <property type="entry name" value="Angiotensin-converting enzyme"/>
    <property type="match status" value="1"/>
</dbReference>
<dbReference type="Gene3D" id="1.10.1370.30">
    <property type="match status" value="1"/>
</dbReference>
<dbReference type="InterPro" id="IPR031588">
    <property type="entry name" value="Collectrin_dom"/>
</dbReference>
<dbReference type="InterPro" id="IPR001548">
    <property type="entry name" value="Peptidase_M2"/>
</dbReference>
<dbReference type="PANTHER" id="PTHR10514">
    <property type="entry name" value="ANGIOTENSIN-CONVERTING ENZYME"/>
    <property type="match status" value="1"/>
</dbReference>
<dbReference type="PANTHER" id="PTHR10514:SF24">
    <property type="entry name" value="ANGIOTENSIN-CONVERTING ENZYME 2"/>
    <property type="match status" value="1"/>
</dbReference>
<dbReference type="Pfam" id="PF16959">
    <property type="entry name" value="Collectrin"/>
    <property type="match status" value="1"/>
</dbReference>
<dbReference type="Pfam" id="PF01401">
    <property type="entry name" value="Peptidase_M2"/>
    <property type="match status" value="1"/>
</dbReference>
<dbReference type="PRINTS" id="PR00791">
    <property type="entry name" value="PEPDIPTASEA"/>
</dbReference>
<dbReference type="SUPFAM" id="SSF55486">
    <property type="entry name" value="Metalloproteases ('zincins'), catalytic domain"/>
    <property type="match status" value="1"/>
</dbReference>
<dbReference type="PROSITE" id="PS52010">
    <property type="entry name" value="COLLECTRIN_LIKE"/>
    <property type="match status" value="1"/>
</dbReference>
<dbReference type="PROSITE" id="PS52011">
    <property type="entry name" value="PEPTIDASE_M2"/>
    <property type="match status" value="1"/>
</dbReference>
<dbReference type="PROSITE" id="PS00678">
    <property type="entry name" value="WD_REPEATS_1"/>
    <property type="match status" value="1"/>
</dbReference>
<dbReference type="PROSITE" id="PS00142">
    <property type="entry name" value="ZINC_PROTEASE"/>
    <property type="match status" value="1"/>
</dbReference>
<feature type="signal peptide" evidence="3">
    <location>
        <begin position="1"/>
        <end position="17"/>
    </location>
</feature>
<feature type="chain" id="PRO_0000028571" description="Angiotensin-converting enzyme 2">
    <location>
        <begin position="18"/>
        <end position="805"/>
    </location>
</feature>
<feature type="chain" id="PRO_0000292269" description="Processed angiotensin-converting enzyme 2">
    <location>
        <begin position="18"/>
        <end position="708"/>
    </location>
</feature>
<feature type="topological domain" description="Extracellular" evidence="3">
    <location>
        <begin position="18"/>
        <end position="740"/>
    </location>
</feature>
<feature type="transmembrane region" description="Helical" evidence="4">
    <location>
        <begin position="741"/>
        <end position="761"/>
    </location>
</feature>
<feature type="topological domain" description="Cytoplasmic" evidence="3">
    <location>
        <begin position="762"/>
        <end position="805"/>
    </location>
</feature>
<feature type="domain" description="Peptidase M2" evidence="5">
    <location>
        <begin position="19"/>
        <end position="607"/>
    </location>
</feature>
<feature type="domain" description="Collectrin-like" evidence="4">
    <location>
        <begin position="614"/>
        <end position="805"/>
    </location>
</feature>
<feature type="region of interest" description="Essential for cleavage by ADAM17" evidence="1">
    <location>
        <begin position="652"/>
        <end position="659"/>
    </location>
</feature>
<feature type="region of interest" description="Essential for cleavage by TMPRSS11D and TMPRSS2" evidence="1">
    <location>
        <begin position="697"/>
        <end position="716"/>
    </location>
</feature>
<feature type="region of interest" description="Disordered" evidence="6">
    <location>
        <begin position="771"/>
        <end position="805"/>
    </location>
</feature>
<feature type="short sequence motif" description="LIR" evidence="2">
    <location>
        <begin position="778"/>
        <end position="786"/>
    </location>
</feature>
<feature type="short sequence motif" description="SH2-binding" evidence="2">
    <location>
        <begin position="781"/>
        <end position="785"/>
    </location>
</feature>
<feature type="short sequence motif" description="Endocytic sorting signal" evidence="2">
    <location>
        <begin position="781"/>
        <end position="784"/>
    </location>
</feature>
<feature type="short sequence motif" description="PTB" evidence="2">
    <location>
        <begin position="792"/>
        <end position="795"/>
    </location>
</feature>
<feature type="short sequence motif" description="PDZ-binding" evidence="2">
    <location>
        <begin position="803"/>
        <end position="805"/>
    </location>
</feature>
<feature type="compositionally biased region" description="Polar residues" evidence="6">
    <location>
        <begin position="793"/>
        <end position="805"/>
    </location>
</feature>
<feature type="active site" description="Proton acceptor" evidence="5">
    <location>
        <position position="375"/>
    </location>
</feature>
<feature type="active site" description="Proton donor" evidence="5">
    <location>
        <position position="505"/>
    </location>
</feature>
<feature type="binding site" evidence="5">
    <location>
        <position position="169"/>
    </location>
    <ligand>
        <name>chloride</name>
        <dbReference type="ChEBI" id="CHEBI:17996"/>
    </ligand>
</feature>
<feature type="binding site" evidence="2">
    <location>
        <position position="273"/>
    </location>
    <ligand>
        <name>substrate</name>
    </ligand>
</feature>
<feature type="binding site" evidence="2">
    <location>
        <begin position="345"/>
        <end position="346"/>
    </location>
    <ligand>
        <name>substrate</name>
    </ligand>
</feature>
<feature type="binding site" evidence="5">
    <location>
        <position position="374"/>
    </location>
    <ligand>
        <name>Zn(2+)</name>
        <dbReference type="ChEBI" id="CHEBI:29105"/>
        <note>catalytic</note>
    </ligand>
</feature>
<feature type="binding site" evidence="5">
    <location>
        <position position="378"/>
    </location>
    <ligand>
        <name>Zn(2+)</name>
        <dbReference type="ChEBI" id="CHEBI:29105"/>
        <note>catalytic</note>
    </ligand>
</feature>
<feature type="binding site" evidence="5">
    <location>
        <position position="402"/>
    </location>
    <ligand>
        <name>Zn(2+)</name>
        <dbReference type="ChEBI" id="CHEBI:29105"/>
        <note>catalytic</note>
    </ligand>
</feature>
<feature type="binding site" evidence="5">
    <location>
        <position position="477"/>
    </location>
    <ligand>
        <name>chloride</name>
        <dbReference type="ChEBI" id="CHEBI:17996"/>
    </ligand>
</feature>
<feature type="binding site" evidence="5">
    <location>
        <position position="481"/>
    </location>
    <ligand>
        <name>chloride</name>
        <dbReference type="ChEBI" id="CHEBI:17996"/>
    </ligand>
</feature>
<feature type="binding site" evidence="2">
    <location>
        <position position="515"/>
    </location>
    <ligand>
        <name>substrate</name>
    </ligand>
</feature>
<feature type="modified residue" description="Phosphotyrosine" evidence="2">
    <location>
        <position position="781"/>
    </location>
</feature>
<feature type="modified residue" description="Phosphoserine" evidence="2">
    <location>
        <position position="783"/>
    </location>
</feature>
<feature type="glycosylation site" description="N-linked (GlcNAc...) asparagine" evidence="3">
    <location>
        <position position="53"/>
    </location>
</feature>
<feature type="glycosylation site" description="N-linked (GlcNAc...) asparagine" evidence="3">
    <location>
        <position position="536"/>
    </location>
</feature>
<feature type="glycosylation site" description="N-linked (GlcNAc...) asparagine" evidence="3">
    <location>
        <position position="546"/>
    </location>
</feature>
<feature type="glycosylation site" description="N-linked (GlcNAc...) asparagine" evidence="3">
    <location>
        <position position="660"/>
    </location>
</feature>
<feature type="glycosylation site" description="N-linked (GlcNAc...) asparagine" evidence="3">
    <location>
        <position position="690"/>
    </location>
</feature>
<feature type="disulfide bond" evidence="5">
    <location>
        <begin position="133"/>
        <end position="141"/>
    </location>
</feature>
<feature type="disulfide bond" evidence="5">
    <location>
        <begin position="344"/>
        <end position="361"/>
    </location>
</feature>
<feature type="disulfide bond" evidence="5">
    <location>
        <begin position="530"/>
        <end position="542"/>
    </location>
</feature>
<feature type="cross-link" description="Glycyl lysine isopeptide (Lys-Gly) (interchain with G-Cter in ubiquitin)" evidence="2">
    <location>
        <position position="788"/>
    </location>
</feature>
<feature type="splice variant" id="VSP_014903" description="In isoform 2." evidence="18">
    <location>
        <begin position="354"/>
        <end position="805"/>
    </location>
</feature>
<feature type="sequence conflict" description="In Ref. 1; BAB40432." evidence="19" ref="1">
    <original>G</original>
    <variation>S</variation>
    <location>
        <position position="167"/>
    </location>
</feature>
<feature type="sequence conflict" description="In Ref. 1; BAB40432." evidence="19" ref="1">
    <original>G</original>
    <variation>E</variation>
    <location>
        <position position="352"/>
    </location>
</feature>
<feature type="sequence conflict" description="In Ref. 1; BAB40431." evidence="19" ref="1">
    <original>N</original>
    <variation>S</variation>
    <location>
        <position position="779"/>
    </location>
</feature>
<feature type="helix" evidence="25">
    <location>
        <begin position="21"/>
        <end position="52"/>
    </location>
</feature>
<feature type="strand" evidence="25">
    <location>
        <begin position="53"/>
        <end position="55"/>
    </location>
</feature>
<feature type="helix" evidence="25">
    <location>
        <begin position="56"/>
        <end position="80"/>
    </location>
</feature>
<feature type="helix" evidence="25">
    <location>
        <begin position="85"/>
        <end position="87"/>
    </location>
</feature>
<feature type="helix" evidence="25">
    <location>
        <begin position="91"/>
        <end position="100"/>
    </location>
</feature>
<feature type="helix" evidence="25">
    <location>
        <begin position="104"/>
        <end position="107"/>
    </location>
</feature>
<feature type="helix" evidence="25">
    <location>
        <begin position="110"/>
        <end position="127"/>
    </location>
</feature>
<feature type="strand" evidence="25">
    <location>
        <begin position="131"/>
        <end position="133"/>
    </location>
</feature>
<feature type="strand" evidence="25">
    <location>
        <begin position="141"/>
        <end position="143"/>
    </location>
</feature>
<feature type="turn" evidence="25">
    <location>
        <begin position="144"/>
        <end position="147"/>
    </location>
</feature>
<feature type="helix" evidence="25">
    <location>
        <begin position="148"/>
        <end position="154"/>
    </location>
</feature>
<feature type="helix" evidence="25">
    <location>
        <begin position="158"/>
        <end position="193"/>
    </location>
</feature>
<feature type="helix" evidence="25">
    <location>
        <begin position="199"/>
        <end position="204"/>
    </location>
</feature>
<feature type="helix" evidence="25">
    <location>
        <begin position="205"/>
        <end position="207"/>
    </location>
</feature>
<feature type="strand" evidence="26">
    <location>
        <begin position="211"/>
        <end position="214"/>
    </location>
</feature>
<feature type="helix" evidence="25">
    <location>
        <begin position="219"/>
        <end position="230"/>
    </location>
</feature>
<feature type="turn" evidence="25">
    <location>
        <begin position="231"/>
        <end position="233"/>
    </location>
</feature>
<feature type="helix" evidence="25">
    <location>
        <begin position="234"/>
        <end position="251"/>
    </location>
</feature>
<feature type="turn" evidence="25">
    <location>
        <begin position="253"/>
        <end position="255"/>
    </location>
</feature>
<feature type="strand" evidence="25">
    <location>
        <begin position="258"/>
        <end position="260"/>
    </location>
</feature>
<feature type="strand" evidence="24">
    <location>
        <begin position="262"/>
        <end position="265"/>
    </location>
</feature>
<feature type="strand" evidence="25">
    <location>
        <begin position="266"/>
        <end position="273"/>
    </location>
</feature>
<feature type="helix" evidence="25">
    <location>
        <begin position="276"/>
        <end position="278"/>
    </location>
</feature>
<feature type="turn" evidence="25">
    <location>
        <begin position="279"/>
        <end position="282"/>
    </location>
</feature>
<feature type="strand" evidence="25">
    <location>
        <begin position="286"/>
        <end position="288"/>
    </location>
</feature>
<feature type="helix" evidence="25">
    <location>
        <begin position="294"/>
        <end position="299"/>
    </location>
</feature>
<feature type="helix" evidence="25">
    <location>
        <begin position="304"/>
        <end position="317"/>
    </location>
</feature>
<feature type="helix" evidence="25">
    <location>
        <begin position="325"/>
        <end position="330"/>
    </location>
</feature>
<feature type="strand" evidence="22">
    <location>
        <begin position="337"/>
        <end position="339"/>
    </location>
</feature>
<feature type="strand" evidence="25">
    <location>
        <begin position="347"/>
        <end position="352"/>
    </location>
</feature>
<feature type="strand" evidence="25">
    <location>
        <begin position="355"/>
        <end position="359"/>
    </location>
</feature>
<feature type="helix" evidence="25">
    <location>
        <begin position="366"/>
        <end position="384"/>
    </location>
</feature>
<feature type="helix" evidence="25">
    <location>
        <begin position="385"/>
        <end position="387"/>
    </location>
</feature>
<feature type="helix" evidence="25">
    <location>
        <begin position="390"/>
        <end position="392"/>
    </location>
</feature>
<feature type="strand" evidence="21">
    <location>
        <begin position="396"/>
        <end position="399"/>
    </location>
</feature>
<feature type="helix" evidence="25">
    <location>
        <begin position="400"/>
        <end position="412"/>
    </location>
</feature>
<feature type="helix" evidence="25">
    <location>
        <begin position="415"/>
        <end position="420"/>
    </location>
</feature>
<feature type="strand" evidence="23">
    <location>
        <begin position="421"/>
        <end position="424"/>
    </location>
</feature>
<feature type="helix" evidence="25">
    <location>
        <begin position="432"/>
        <end position="446"/>
    </location>
</feature>
<feature type="helix" evidence="25">
    <location>
        <begin position="449"/>
        <end position="464"/>
    </location>
</feature>
<feature type="strand" evidence="20">
    <location>
        <begin position="466"/>
        <end position="468"/>
    </location>
</feature>
<feature type="helix" evidence="25">
    <location>
        <begin position="470"/>
        <end position="472"/>
    </location>
</feature>
<feature type="helix" evidence="25">
    <location>
        <begin position="473"/>
        <end position="483"/>
    </location>
</feature>
<feature type="helix" evidence="25">
    <location>
        <begin position="500"/>
        <end position="502"/>
    </location>
</feature>
<feature type="helix" evidence="25">
    <location>
        <begin position="504"/>
        <end position="507"/>
    </location>
</feature>
<feature type="helix" evidence="25">
    <location>
        <begin position="513"/>
        <end position="532"/>
    </location>
</feature>
<feature type="helix" evidence="25">
    <location>
        <begin position="539"/>
        <end position="541"/>
    </location>
</feature>
<feature type="helix" evidence="25">
    <location>
        <begin position="548"/>
        <end position="560"/>
    </location>
</feature>
<feature type="helix" evidence="25">
    <location>
        <begin position="566"/>
        <end position="574"/>
    </location>
</feature>
<feature type="helix" evidence="25">
    <location>
        <begin position="582"/>
        <end position="587"/>
    </location>
</feature>
<feature type="helix" evidence="25">
    <location>
        <begin position="589"/>
        <end position="597"/>
    </location>
</feature>
<feature type="strand" evidence="25">
    <location>
        <begin position="600"/>
        <end position="602"/>
    </location>
</feature>